<gene>
    <name evidence="2" type="primary">rnj2</name>
    <name type="ordered locus">SAS1209</name>
</gene>
<organism>
    <name type="scientific">Staphylococcus aureus (strain MSSA476)</name>
    <dbReference type="NCBI Taxonomy" id="282459"/>
    <lineage>
        <taxon>Bacteria</taxon>
        <taxon>Bacillati</taxon>
        <taxon>Bacillota</taxon>
        <taxon>Bacilli</taxon>
        <taxon>Bacillales</taxon>
        <taxon>Staphylococcaceae</taxon>
        <taxon>Staphylococcus</taxon>
    </lineage>
</organism>
<protein>
    <recommendedName>
        <fullName evidence="2">Ribonuclease J 2</fullName>
        <shortName evidence="2">RNase J2</shortName>
        <ecNumber evidence="2">3.1.-.-</ecNumber>
    </recommendedName>
</protein>
<keyword id="KW-0963">Cytoplasm</keyword>
<keyword id="KW-0255">Endonuclease</keyword>
<keyword id="KW-0269">Exonuclease</keyword>
<keyword id="KW-0378">Hydrolase</keyword>
<keyword id="KW-0479">Metal-binding</keyword>
<keyword id="KW-0540">Nuclease</keyword>
<keyword id="KW-0694">RNA-binding</keyword>
<keyword id="KW-0698">rRNA processing</keyword>
<keyword id="KW-0862">Zinc</keyword>
<proteinExistence type="inferred from homology"/>
<reference key="1">
    <citation type="journal article" date="2004" name="Proc. Natl. Acad. Sci. U.S.A.">
        <title>Complete genomes of two clinical Staphylococcus aureus strains: evidence for the rapid evolution of virulence and drug resistance.</title>
        <authorList>
            <person name="Holden M.T.G."/>
            <person name="Feil E.J."/>
            <person name="Lindsay J.A."/>
            <person name="Peacock S.J."/>
            <person name="Day N.P.J."/>
            <person name="Enright M.C."/>
            <person name="Foster T.J."/>
            <person name="Moore C.E."/>
            <person name="Hurst L."/>
            <person name="Atkin R."/>
            <person name="Barron A."/>
            <person name="Bason N."/>
            <person name="Bentley S.D."/>
            <person name="Chillingworth C."/>
            <person name="Chillingworth T."/>
            <person name="Churcher C."/>
            <person name="Clark L."/>
            <person name="Corton C."/>
            <person name="Cronin A."/>
            <person name="Doggett J."/>
            <person name="Dowd L."/>
            <person name="Feltwell T."/>
            <person name="Hance Z."/>
            <person name="Harris B."/>
            <person name="Hauser H."/>
            <person name="Holroyd S."/>
            <person name="Jagels K."/>
            <person name="James K.D."/>
            <person name="Lennard N."/>
            <person name="Line A."/>
            <person name="Mayes R."/>
            <person name="Moule S."/>
            <person name="Mungall K."/>
            <person name="Ormond D."/>
            <person name="Quail M.A."/>
            <person name="Rabbinowitsch E."/>
            <person name="Rutherford K.M."/>
            <person name="Sanders M."/>
            <person name="Sharp S."/>
            <person name="Simmonds M."/>
            <person name="Stevens K."/>
            <person name="Whitehead S."/>
            <person name="Barrell B.G."/>
            <person name="Spratt B.G."/>
            <person name="Parkhill J."/>
        </authorList>
    </citation>
    <scope>NUCLEOTIDE SEQUENCE [LARGE SCALE GENOMIC DNA]</scope>
    <source>
        <strain>MSSA476</strain>
    </source>
</reference>
<name>RNJ2_STAAS</name>
<evidence type="ECO:0000250" key="1"/>
<evidence type="ECO:0000255" key="2">
    <source>
        <dbReference type="HAMAP-Rule" id="MF_01491"/>
    </source>
</evidence>
<dbReference type="EC" id="3.1.-.-" evidence="2"/>
<dbReference type="EMBL" id="BX571857">
    <property type="protein sequence ID" value="CAG42986.1"/>
    <property type="molecule type" value="Genomic_DNA"/>
</dbReference>
<dbReference type="SMR" id="Q6G9T8"/>
<dbReference type="KEGG" id="sas:SAS1209"/>
<dbReference type="HOGENOM" id="CLU_008727_3_1_9"/>
<dbReference type="GO" id="GO:0005737">
    <property type="term" value="C:cytoplasm"/>
    <property type="evidence" value="ECO:0007669"/>
    <property type="project" value="UniProtKB-SubCell"/>
</dbReference>
<dbReference type="GO" id="GO:0004534">
    <property type="term" value="F:5'-3' RNA exonuclease activity"/>
    <property type="evidence" value="ECO:0007669"/>
    <property type="project" value="UniProtKB-UniRule"/>
</dbReference>
<dbReference type="GO" id="GO:0003723">
    <property type="term" value="F:RNA binding"/>
    <property type="evidence" value="ECO:0007669"/>
    <property type="project" value="UniProtKB-UniRule"/>
</dbReference>
<dbReference type="GO" id="GO:0004521">
    <property type="term" value="F:RNA endonuclease activity"/>
    <property type="evidence" value="ECO:0007669"/>
    <property type="project" value="UniProtKB-UniRule"/>
</dbReference>
<dbReference type="GO" id="GO:0008270">
    <property type="term" value="F:zinc ion binding"/>
    <property type="evidence" value="ECO:0007669"/>
    <property type="project" value="InterPro"/>
</dbReference>
<dbReference type="GO" id="GO:0006364">
    <property type="term" value="P:rRNA processing"/>
    <property type="evidence" value="ECO:0007669"/>
    <property type="project" value="UniProtKB-UniRule"/>
</dbReference>
<dbReference type="CDD" id="cd07714">
    <property type="entry name" value="RNaseJ_MBL-fold"/>
    <property type="match status" value="1"/>
</dbReference>
<dbReference type="FunFam" id="3.10.20.580:FF:000001">
    <property type="entry name" value="Ribonuclease J"/>
    <property type="match status" value="1"/>
</dbReference>
<dbReference type="FunFam" id="3.40.50.10710:FF:000002">
    <property type="entry name" value="Ribonuclease J 2"/>
    <property type="match status" value="1"/>
</dbReference>
<dbReference type="Gene3D" id="3.10.20.580">
    <property type="match status" value="1"/>
</dbReference>
<dbReference type="Gene3D" id="3.40.50.10710">
    <property type="entry name" value="Metallo-hydrolase/oxidoreductase"/>
    <property type="match status" value="1"/>
</dbReference>
<dbReference type="Gene3D" id="3.60.15.10">
    <property type="entry name" value="Ribonuclease Z/Hydroxyacylglutathione hydrolase-like"/>
    <property type="match status" value="1"/>
</dbReference>
<dbReference type="HAMAP" id="MF_01491">
    <property type="entry name" value="RNase_J_bact"/>
    <property type="match status" value="1"/>
</dbReference>
<dbReference type="InterPro" id="IPR001279">
    <property type="entry name" value="Metallo-B-lactamas"/>
</dbReference>
<dbReference type="InterPro" id="IPR036866">
    <property type="entry name" value="RibonucZ/Hydroxyglut_hydro"/>
</dbReference>
<dbReference type="InterPro" id="IPR011108">
    <property type="entry name" value="RMMBL"/>
</dbReference>
<dbReference type="InterPro" id="IPR004613">
    <property type="entry name" value="RNase_J"/>
</dbReference>
<dbReference type="InterPro" id="IPR042173">
    <property type="entry name" value="RNase_J_2"/>
</dbReference>
<dbReference type="InterPro" id="IPR055132">
    <property type="entry name" value="RNase_J_b_CASP"/>
</dbReference>
<dbReference type="InterPro" id="IPR030854">
    <property type="entry name" value="RNase_J_bac"/>
</dbReference>
<dbReference type="InterPro" id="IPR041636">
    <property type="entry name" value="RNase_J_C"/>
</dbReference>
<dbReference type="NCBIfam" id="TIGR00649">
    <property type="entry name" value="MG423"/>
    <property type="match status" value="1"/>
</dbReference>
<dbReference type="PANTHER" id="PTHR43694">
    <property type="entry name" value="RIBONUCLEASE J"/>
    <property type="match status" value="1"/>
</dbReference>
<dbReference type="PANTHER" id="PTHR43694:SF4">
    <property type="entry name" value="RIBONUCLEASE J 2"/>
    <property type="match status" value="1"/>
</dbReference>
<dbReference type="Pfam" id="PF00753">
    <property type="entry name" value="Lactamase_B"/>
    <property type="match status" value="1"/>
</dbReference>
<dbReference type="Pfam" id="PF07521">
    <property type="entry name" value="RMMBL"/>
    <property type="match status" value="1"/>
</dbReference>
<dbReference type="Pfam" id="PF22505">
    <property type="entry name" value="RNase_J_b_CASP"/>
    <property type="match status" value="1"/>
</dbReference>
<dbReference type="Pfam" id="PF17770">
    <property type="entry name" value="RNase_J_C"/>
    <property type="match status" value="1"/>
</dbReference>
<dbReference type="PIRSF" id="PIRSF004803">
    <property type="entry name" value="RnjA"/>
    <property type="match status" value="1"/>
</dbReference>
<dbReference type="SMART" id="SM00849">
    <property type="entry name" value="Lactamase_B"/>
    <property type="match status" value="1"/>
</dbReference>
<dbReference type="SUPFAM" id="SSF56281">
    <property type="entry name" value="Metallo-hydrolase/oxidoreductase"/>
    <property type="match status" value="1"/>
</dbReference>
<feature type="chain" id="PRO_0000286849" description="Ribonuclease J 2">
    <location>
        <begin position="1"/>
        <end position="557"/>
    </location>
</feature>
<feature type="binding site" evidence="2">
    <location>
        <position position="76"/>
    </location>
    <ligand>
        <name>Zn(2+)</name>
        <dbReference type="ChEBI" id="CHEBI:29105"/>
        <note>catalytic</note>
    </ligand>
</feature>
<feature type="binding site" evidence="2">
    <location>
        <position position="78"/>
    </location>
    <ligand>
        <name>Zn(2+)</name>
        <dbReference type="ChEBI" id="CHEBI:29105"/>
        <note>catalytic</note>
    </ligand>
</feature>
<feature type="binding site" evidence="2">
    <location>
        <position position="144"/>
    </location>
    <ligand>
        <name>Zn(2+)</name>
        <dbReference type="ChEBI" id="CHEBI:29105"/>
        <note>catalytic</note>
    </ligand>
</feature>
<feature type="binding site" evidence="2">
    <location>
        <position position="166"/>
    </location>
    <ligand>
        <name>Zn(2+)</name>
        <dbReference type="ChEBI" id="CHEBI:29105"/>
        <note>catalytic</note>
    </ligand>
</feature>
<feature type="binding site" evidence="2">
    <location>
        <begin position="366"/>
        <end position="370"/>
    </location>
    <ligand>
        <name>substrate</name>
    </ligand>
</feature>
<sequence>MSLIKKKNKDIRIIPLGGVGEIAKNMYIVEVDDEMFMLDAGLMFPEDEMLGIDIVIPDISYVLENKDKLKGIFLTHGHEHAIGAVSYVLEQLDAPVYGSKLTIALIKENMKARNIDKKVRYYTVNNDSIMRFKNVNISFFNTTHSIPDSLGVCIHTSYGAIVYTGEFKFDQSLHGHYAPDIKRMAEIGEEGVFVLISDSTEAEKPGYNTPENVIEHHMYDAFAKVRGRLIVSCYASNFIRIQQVLNIASKLNRKVSFLGRSLESSFNIARKMGYFDIPKDLLIPITEVDNYPKNEVIIIATGMQGEPVEALSQMAQHKHKIMNIEEGDSVFLAITASANMEVIIANTLNELVRAGAHIIPNNKKIHASSHGCMEELKMMINIMKPEYFIPVQGEFKMQIAHAKLAAEAGVAPEKIFLVEKGDVINYNGKDMILNEKVNSGNILIDGIGIGDVGNIVLRDRHLLAEDGIFIAVVTLDPKNRRIAAGPEIQSRGFVYVRESEDLLREAEEKVREIVEAGLQEKRIEWSEIKQNMRDQISKLLFESTKRRPMIIPVISEI</sequence>
<accession>Q6G9T8</accession>
<comment type="function">
    <text evidence="1">An RNase that has 5'-3' exonuclease and possibly endoonuclease activity. Involved in maturation of rRNA and in some organisms also mRNA maturation and/or decay (By similarity).</text>
</comment>
<comment type="cofactor">
    <cofactor evidence="2">
        <name>Zn(2+)</name>
        <dbReference type="ChEBI" id="CHEBI:29105"/>
    </cofactor>
    <text evidence="2">Binds up to 2 Zn(2+) ions per subunit. It is not clear if Zn(2+) or Mg(2+) is physiologically important.</text>
</comment>
<comment type="subunit">
    <text evidence="2">Homodimer, may be a subunit of the RNA degradosome.</text>
</comment>
<comment type="subcellular location">
    <subcellularLocation>
        <location evidence="2">Cytoplasm</location>
    </subcellularLocation>
</comment>
<comment type="similarity">
    <text evidence="2">Belongs to the metallo-beta-lactamase superfamily. RNA-metabolizing metallo-beta-lactamase-like family. Bacterial RNase J subfamily.</text>
</comment>